<proteinExistence type="inferred from homology"/>
<evidence type="ECO:0000255" key="1">
    <source>
        <dbReference type="HAMAP-Rule" id="MF_01708"/>
    </source>
</evidence>
<gene>
    <name evidence="1" type="primary">lolD</name>
    <name type="ordered locus">amb2571</name>
</gene>
<protein>
    <recommendedName>
        <fullName evidence="1">Lipoprotein-releasing system ATP-binding protein LolD</fullName>
        <ecNumber evidence="1">7.6.2.-</ecNumber>
    </recommendedName>
</protein>
<comment type="function">
    <text evidence="1">Part of the ABC transporter complex LolCDE involved in the translocation of mature outer membrane-directed lipoproteins, from the inner membrane to the periplasmic chaperone, LolA. Responsible for the formation of the LolA-lipoprotein complex in an ATP-dependent manner.</text>
</comment>
<comment type="subunit">
    <text evidence="1">The complex is composed of two ATP-binding proteins (LolD) and two transmembrane proteins (LolC and LolE).</text>
</comment>
<comment type="subcellular location">
    <subcellularLocation>
        <location evidence="1">Cell inner membrane</location>
        <topology evidence="1">Peripheral membrane protein</topology>
    </subcellularLocation>
</comment>
<comment type="similarity">
    <text evidence="1">Belongs to the ABC transporter superfamily. Lipoprotein translocase (TC 3.A.1.125) family.</text>
</comment>
<feature type="chain" id="PRO_0000272102" description="Lipoprotein-releasing system ATP-binding protein LolD">
    <location>
        <begin position="1"/>
        <end position="226"/>
    </location>
</feature>
<feature type="domain" description="ABC transporter" evidence="1">
    <location>
        <begin position="6"/>
        <end position="226"/>
    </location>
</feature>
<feature type="binding site" evidence="1">
    <location>
        <begin position="42"/>
        <end position="49"/>
    </location>
    <ligand>
        <name>ATP</name>
        <dbReference type="ChEBI" id="CHEBI:30616"/>
    </ligand>
</feature>
<sequence length="226" mass="24397">MNNHGLKLDNIRRAFKQGKDDLEVLKGANLEIRAGEIVALVGPSGAGKSTLLHIAGLLERPDGGEVFLAGNPAGALGEKERTQLRRLHLGFVYQYHHLLPEFSAIENVVLPQMIAGVPQAKARERAMELLGRMKLAERAEHRPGQLSGGEQQRVAICRALANAPRVLLADEPTGNLDPHTADGVFDELIRLVKGSGVAALIATHNPDLAARMDRVVKMSEGLLVEV</sequence>
<accession>Q2W450</accession>
<organism>
    <name type="scientific">Paramagnetospirillum magneticum (strain ATCC 700264 / AMB-1)</name>
    <name type="common">Magnetospirillum magneticum</name>
    <dbReference type="NCBI Taxonomy" id="342108"/>
    <lineage>
        <taxon>Bacteria</taxon>
        <taxon>Pseudomonadati</taxon>
        <taxon>Pseudomonadota</taxon>
        <taxon>Alphaproteobacteria</taxon>
        <taxon>Rhodospirillales</taxon>
        <taxon>Magnetospirillaceae</taxon>
        <taxon>Paramagnetospirillum</taxon>
    </lineage>
</organism>
<reference key="1">
    <citation type="journal article" date="2005" name="DNA Res.">
        <title>Complete genome sequence of the facultative anaerobic magnetotactic bacterium Magnetospirillum sp. strain AMB-1.</title>
        <authorList>
            <person name="Matsunaga T."/>
            <person name="Okamura Y."/>
            <person name="Fukuda Y."/>
            <person name="Wahyudi A.T."/>
            <person name="Murase Y."/>
            <person name="Takeyama H."/>
        </authorList>
    </citation>
    <scope>NUCLEOTIDE SEQUENCE [LARGE SCALE GENOMIC DNA]</scope>
    <source>
        <strain>ATCC 700264 / AMB-1</strain>
    </source>
</reference>
<keyword id="KW-0067">ATP-binding</keyword>
<keyword id="KW-0997">Cell inner membrane</keyword>
<keyword id="KW-1003">Cell membrane</keyword>
<keyword id="KW-0472">Membrane</keyword>
<keyword id="KW-0547">Nucleotide-binding</keyword>
<keyword id="KW-1278">Translocase</keyword>
<keyword id="KW-0813">Transport</keyword>
<name>LOLD_PARM1</name>
<dbReference type="EC" id="7.6.2.-" evidence="1"/>
<dbReference type="EMBL" id="AP007255">
    <property type="protein sequence ID" value="BAE51375.1"/>
    <property type="molecule type" value="Genomic_DNA"/>
</dbReference>
<dbReference type="RefSeq" id="WP_011384952.1">
    <property type="nucleotide sequence ID" value="NC_007626.1"/>
</dbReference>
<dbReference type="SMR" id="Q2W450"/>
<dbReference type="STRING" id="342108.amb2571"/>
<dbReference type="KEGG" id="mag:amb2571"/>
<dbReference type="HOGENOM" id="CLU_000604_1_22_5"/>
<dbReference type="OrthoDB" id="9802264at2"/>
<dbReference type="Proteomes" id="UP000007058">
    <property type="component" value="Chromosome"/>
</dbReference>
<dbReference type="GO" id="GO:0005886">
    <property type="term" value="C:plasma membrane"/>
    <property type="evidence" value="ECO:0007669"/>
    <property type="project" value="UniProtKB-SubCell"/>
</dbReference>
<dbReference type="GO" id="GO:0005524">
    <property type="term" value="F:ATP binding"/>
    <property type="evidence" value="ECO:0007669"/>
    <property type="project" value="UniProtKB-KW"/>
</dbReference>
<dbReference type="GO" id="GO:0016887">
    <property type="term" value="F:ATP hydrolysis activity"/>
    <property type="evidence" value="ECO:0007669"/>
    <property type="project" value="InterPro"/>
</dbReference>
<dbReference type="GO" id="GO:0022857">
    <property type="term" value="F:transmembrane transporter activity"/>
    <property type="evidence" value="ECO:0007669"/>
    <property type="project" value="TreeGrafter"/>
</dbReference>
<dbReference type="GO" id="GO:0044874">
    <property type="term" value="P:lipoprotein localization to outer membrane"/>
    <property type="evidence" value="ECO:0007669"/>
    <property type="project" value="TreeGrafter"/>
</dbReference>
<dbReference type="GO" id="GO:0089705">
    <property type="term" value="P:protein localization to outer membrane"/>
    <property type="evidence" value="ECO:0007669"/>
    <property type="project" value="TreeGrafter"/>
</dbReference>
<dbReference type="CDD" id="cd03255">
    <property type="entry name" value="ABC_MJ0796_LolCDE_FtsE"/>
    <property type="match status" value="1"/>
</dbReference>
<dbReference type="FunFam" id="3.40.50.300:FF:000032">
    <property type="entry name" value="Export ABC transporter ATP-binding protein"/>
    <property type="match status" value="1"/>
</dbReference>
<dbReference type="Gene3D" id="3.40.50.300">
    <property type="entry name" value="P-loop containing nucleotide triphosphate hydrolases"/>
    <property type="match status" value="1"/>
</dbReference>
<dbReference type="InterPro" id="IPR003593">
    <property type="entry name" value="AAA+_ATPase"/>
</dbReference>
<dbReference type="InterPro" id="IPR003439">
    <property type="entry name" value="ABC_transporter-like_ATP-bd"/>
</dbReference>
<dbReference type="InterPro" id="IPR017871">
    <property type="entry name" value="ABC_transporter-like_CS"/>
</dbReference>
<dbReference type="InterPro" id="IPR015854">
    <property type="entry name" value="ABC_transpr_LolD-like"/>
</dbReference>
<dbReference type="InterPro" id="IPR017911">
    <property type="entry name" value="MacB-like_ATP-bd"/>
</dbReference>
<dbReference type="InterPro" id="IPR027417">
    <property type="entry name" value="P-loop_NTPase"/>
</dbReference>
<dbReference type="PANTHER" id="PTHR24220">
    <property type="entry name" value="IMPORT ATP-BINDING PROTEIN"/>
    <property type="match status" value="1"/>
</dbReference>
<dbReference type="PANTHER" id="PTHR24220:SF689">
    <property type="entry name" value="LIPOPROTEIN-RELEASING SYSTEM ATP-BINDING PROTEIN LOLD"/>
    <property type="match status" value="1"/>
</dbReference>
<dbReference type="Pfam" id="PF00005">
    <property type="entry name" value="ABC_tran"/>
    <property type="match status" value="1"/>
</dbReference>
<dbReference type="SMART" id="SM00382">
    <property type="entry name" value="AAA"/>
    <property type="match status" value="1"/>
</dbReference>
<dbReference type="SUPFAM" id="SSF52540">
    <property type="entry name" value="P-loop containing nucleoside triphosphate hydrolases"/>
    <property type="match status" value="1"/>
</dbReference>
<dbReference type="PROSITE" id="PS00211">
    <property type="entry name" value="ABC_TRANSPORTER_1"/>
    <property type="match status" value="1"/>
</dbReference>
<dbReference type="PROSITE" id="PS50893">
    <property type="entry name" value="ABC_TRANSPORTER_2"/>
    <property type="match status" value="1"/>
</dbReference>
<dbReference type="PROSITE" id="PS51244">
    <property type="entry name" value="LOLD"/>
    <property type="match status" value="1"/>
</dbReference>